<keyword id="KW-1185">Reference proteome</keyword>
<keyword id="KW-0687">Ribonucleoprotein</keyword>
<keyword id="KW-0689">Ribosomal protein</keyword>
<protein>
    <recommendedName>
        <fullName evidence="1">Large ribosomal subunit protein bL35</fullName>
    </recommendedName>
    <alternativeName>
        <fullName evidence="3">50S ribosomal protein L35</fullName>
    </alternativeName>
</protein>
<organism>
    <name type="scientific">Halorhodospira halophila (strain DSM 244 / SL1)</name>
    <name type="common">Ectothiorhodospira halophila (strain DSM 244 / SL1)</name>
    <dbReference type="NCBI Taxonomy" id="349124"/>
    <lineage>
        <taxon>Bacteria</taxon>
        <taxon>Pseudomonadati</taxon>
        <taxon>Pseudomonadota</taxon>
        <taxon>Gammaproteobacteria</taxon>
        <taxon>Chromatiales</taxon>
        <taxon>Ectothiorhodospiraceae</taxon>
        <taxon>Halorhodospira</taxon>
    </lineage>
</organism>
<evidence type="ECO:0000255" key="1">
    <source>
        <dbReference type="HAMAP-Rule" id="MF_00514"/>
    </source>
</evidence>
<evidence type="ECO:0000256" key="2">
    <source>
        <dbReference type="SAM" id="MobiDB-lite"/>
    </source>
</evidence>
<evidence type="ECO:0000305" key="3"/>
<reference key="1">
    <citation type="submission" date="2006-12" db="EMBL/GenBank/DDBJ databases">
        <title>Complete sequence of Halorhodospira halophila SL1.</title>
        <authorList>
            <consortium name="US DOE Joint Genome Institute"/>
            <person name="Copeland A."/>
            <person name="Lucas S."/>
            <person name="Lapidus A."/>
            <person name="Barry K."/>
            <person name="Detter J.C."/>
            <person name="Glavina del Rio T."/>
            <person name="Hammon N."/>
            <person name="Israni S."/>
            <person name="Dalin E."/>
            <person name="Tice H."/>
            <person name="Pitluck S."/>
            <person name="Saunders E."/>
            <person name="Brettin T."/>
            <person name="Bruce D."/>
            <person name="Han C."/>
            <person name="Tapia R."/>
            <person name="Schmutz J."/>
            <person name="Larimer F."/>
            <person name="Land M."/>
            <person name="Hauser L."/>
            <person name="Kyrpides N."/>
            <person name="Mikhailova N."/>
            <person name="Hoff W."/>
            <person name="Richardson P."/>
        </authorList>
    </citation>
    <scope>NUCLEOTIDE SEQUENCE [LARGE SCALE GENOMIC DNA]</scope>
    <source>
        <strain>DSM 244 / SL1</strain>
    </source>
</reference>
<feature type="chain" id="PRO_1000050699" description="Large ribosomal subunit protein bL35">
    <location>
        <begin position="1"/>
        <end position="64"/>
    </location>
</feature>
<feature type="region of interest" description="Disordered" evidence="2">
    <location>
        <begin position="1"/>
        <end position="44"/>
    </location>
</feature>
<feature type="compositionally biased region" description="Basic residues" evidence="2">
    <location>
        <begin position="10"/>
        <end position="44"/>
    </location>
</feature>
<accession>A1WU55</accession>
<comment type="similarity">
    <text evidence="1">Belongs to the bacterial ribosomal protein bL35 family.</text>
</comment>
<gene>
    <name evidence="1" type="primary">rpmI</name>
    <name type="ordered locus">Hhal_0429</name>
</gene>
<dbReference type="EMBL" id="CP000544">
    <property type="protein sequence ID" value="ABM61217.1"/>
    <property type="molecule type" value="Genomic_DNA"/>
</dbReference>
<dbReference type="RefSeq" id="WP_011813240.1">
    <property type="nucleotide sequence ID" value="NC_008789.1"/>
</dbReference>
<dbReference type="SMR" id="A1WU55"/>
<dbReference type="STRING" id="349124.Hhal_0429"/>
<dbReference type="KEGG" id="hha:Hhal_0429"/>
<dbReference type="eggNOG" id="COG0291">
    <property type="taxonomic scope" value="Bacteria"/>
</dbReference>
<dbReference type="HOGENOM" id="CLU_169643_1_1_6"/>
<dbReference type="OrthoDB" id="47476at2"/>
<dbReference type="Proteomes" id="UP000000647">
    <property type="component" value="Chromosome"/>
</dbReference>
<dbReference type="GO" id="GO:0022625">
    <property type="term" value="C:cytosolic large ribosomal subunit"/>
    <property type="evidence" value="ECO:0007669"/>
    <property type="project" value="TreeGrafter"/>
</dbReference>
<dbReference type="GO" id="GO:0003735">
    <property type="term" value="F:structural constituent of ribosome"/>
    <property type="evidence" value="ECO:0007669"/>
    <property type="project" value="InterPro"/>
</dbReference>
<dbReference type="GO" id="GO:0006412">
    <property type="term" value="P:translation"/>
    <property type="evidence" value="ECO:0007669"/>
    <property type="project" value="UniProtKB-UniRule"/>
</dbReference>
<dbReference type="FunFam" id="4.10.410.60:FF:000001">
    <property type="entry name" value="50S ribosomal protein L35"/>
    <property type="match status" value="1"/>
</dbReference>
<dbReference type="Gene3D" id="4.10.410.60">
    <property type="match status" value="1"/>
</dbReference>
<dbReference type="HAMAP" id="MF_00514">
    <property type="entry name" value="Ribosomal_bL35"/>
    <property type="match status" value="1"/>
</dbReference>
<dbReference type="InterPro" id="IPR001706">
    <property type="entry name" value="Ribosomal_bL35"/>
</dbReference>
<dbReference type="InterPro" id="IPR021137">
    <property type="entry name" value="Ribosomal_bL35-like"/>
</dbReference>
<dbReference type="InterPro" id="IPR018265">
    <property type="entry name" value="Ribosomal_bL35_CS"/>
</dbReference>
<dbReference type="InterPro" id="IPR037229">
    <property type="entry name" value="Ribosomal_bL35_sf"/>
</dbReference>
<dbReference type="NCBIfam" id="TIGR00001">
    <property type="entry name" value="rpmI_bact"/>
    <property type="match status" value="1"/>
</dbReference>
<dbReference type="PANTHER" id="PTHR33343">
    <property type="entry name" value="54S RIBOSOMAL PROTEIN BL35M"/>
    <property type="match status" value="1"/>
</dbReference>
<dbReference type="PANTHER" id="PTHR33343:SF1">
    <property type="entry name" value="LARGE RIBOSOMAL SUBUNIT PROTEIN BL35M"/>
    <property type="match status" value="1"/>
</dbReference>
<dbReference type="Pfam" id="PF01632">
    <property type="entry name" value="Ribosomal_L35p"/>
    <property type="match status" value="1"/>
</dbReference>
<dbReference type="PRINTS" id="PR00064">
    <property type="entry name" value="RIBOSOMALL35"/>
</dbReference>
<dbReference type="SUPFAM" id="SSF143034">
    <property type="entry name" value="L35p-like"/>
    <property type="match status" value="1"/>
</dbReference>
<dbReference type="PROSITE" id="PS00936">
    <property type="entry name" value="RIBOSOMAL_L35"/>
    <property type="match status" value="1"/>
</dbReference>
<sequence length="64" mass="7404">MPKLKTNRGAAKRFKVKASGRISRARSNHSHILTKKDPKRKRRLRELTEVHASDAPMVRRMVAK</sequence>
<name>RL35_HALHL</name>
<proteinExistence type="inferred from homology"/>